<feature type="chain" id="PRO_0000306496" description="Imidazolonepropionase">
    <location>
        <begin position="1"/>
        <end position="415"/>
    </location>
</feature>
<feature type="binding site" evidence="1">
    <location>
        <position position="74"/>
    </location>
    <ligand>
        <name>Fe(3+)</name>
        <dbReference type="ChEBI" id="CHEBI:29034"/>
    </ligand>
</feature>
<feature type="binding site" evidence="1">
    <location>
        <position position="74"/>
    </location>
    <ligand>
        <name>Zn(2+)</name>
        <dbReference type="ChEBI" id="CHEBI:29105"/>
    </ligand>
</feature>
<feature type="binding site" evidence="1">
    <location>
        <position position="76"/>
    </location>
    <ligand>
        <name>Fe(3+)</name>
        <dbReference type="ChEBI" id="CHEBI:29034"/>
    </ligand>
</feature>
<feature type="binding site" evidence="1">
    <location>
        <position position="76"/>
    </location>
    <ligand>
        <name>Zn(2+)</name>
        <dbReference type="ChEBI" id="CHEBI:29105"/>
    </ligand>
</feature>
<feature type="binding site" evidence="1">
    <location>
        <position position="83"/>
    </location>
    <ligand>
        <name>4-imidazolone-5-propanoate</name>
        <dbReference type="ChEBI" id="CHEBI:77893"/>
    </ligand>
</feature>
<feature type="binding site" evidence="1">
    <location>
        <position position="146"/>
    </location>
    <ligand>
        <name>4-imidazolone-5-propanoate</name>
        <dbReference type="ChEBI" id="CHEBI:77893"/>
    </ligand>
</feature>
<feature type="binding site" evidence="1">
    <location>
        <position position="146"/>
    </location>
    <ligand>
        <name>N-formimidoyl-L-glutamate</name>
        <dbReference type="ChEBI" id="CHEBI:58928"/>
    </ligand>
</feature>
<feature type="binding site" evidence="1">
    <location>
        <position position="179"/>
    </location>
    <ligand>
        <name>4-imidazolone-5-propanoate</name>
        <dbReference type="ChEBI" id="CHEBI:77893"/>
    </ligand>
</feature>
<feature type="binding site" evidence="1">
    <location>
        <position position="244"/>
    </location>
    <ligand>
        <name>Fe(3+)</name>
        <dbReference type="ChEBI" id="CHEBI:29034"/>
    </ligand>
</feature>
<feature type="binding site" evidence="1">
    <location>
        <position position="244"/>
    </location>
    <ligand>
        <name>Zn(2+)</name>
        <dbReference type="ChEBI" id="CHEBI:29105"/>
    </ligand>
</feature>
<feature type="binding site" evidence="1">
    <location>
        <position position="247"/>
    </location>
    <ligand>
        <name>4-imidazolone-5-propanoate</name>
        <dbReference type="ChEBI" id="CHEBI:77893"/>
    </ligand>
</feature>
<feature type="binding site" evidence="1">
    <location>
        <position position="319"/>
    </location>
    <ligand>
        <name>Fe(3+)</name>
        <dbReference type="ChEBI" id="CHEBI:29034"/>
    </ligand>
</feature>
<feature type="binding site" evidence="1">
    <location>
        <position position="319"/>
    </location>
    <ligand>
        <name>Zn(2+)</name>
        <dbReference type="ChEBI" id="CHEBI:29105"/>
    </ligand>
</feature>
<feature type="binding site" evidence="1">
    <location>
        <position position="321"/>
    </location>
    <ligand>
        <name>N-formimidoyl-L-glutamate</name>
        <dbReference type="ChEBI" id="CHEBI:58928"/>
    </ligand>
</feature>
<feature type="binding site" evidence="1">
    <location>
        <position position="323"/>
    </location>
    <ligand>
        <name>N-formimidoyl-L-glutamate</name>
        <dbReference type="ChEBI" id="CHEBI:58928"/>
    </ligand>
</feature>
<feature type="binding site" evidence="1">
    <location>
        <position position="324"/>
    </location>
    <ligand>
        <name>4-imidazolone-5-propanoate</name>
        <dbReference type="ChEBI" id="CHEBI:77893"/>
    </ligand>
</feature>
<evidence type="ECO:0000255" key="1">
    <source>
        <dbReference type="HAMAP-Rule" id="MF_00372"/>
    </source>
</evidence>
<protein>
    <recommendedName>
        <fullName evidence="1">Imidazolonepropionase</fullName>
        <ecNumber evidence="1">3.5.2.7</ecNumber>
    </recommendedName>
    <alternativeName>
        <fullName evidence="1">Imidazolone-5-propionate hydrolase</fullName>
    </alternativeName>
</protein>
<name>HUTI_CUPMC</name>
<reference key="1">
    <citation type="journal article" date="2010" name="PLoS ONE">
        <title>The complete genome sequence of Cupriavidus metallidurans strain CH34, a master survivalist in harsh and anthropogenic environments.</title>
        <authorList>
            <person name="Janssen P.J."/>
            <person name="Van Houdt R."/>
            <person name="Moors H."/>
            <person name="Monsieurs P."/>
            <person name="Morin N."/>
            <person name="Michaux A."/>
            <person name="Benotmane M.A."/>
            <person name="Leys N."/>
            <person name="Vallaeys T."/>
            <person name="Lapidus A."/>
            <person name="Monchy S."/>
            <person name="Medigue C."/>
            <person name="Taghavi S."/>
            <person name="McCorkle S."/>
            <person name="Dunn J."/>
            <person name="van der Lelie D."/>
            <person name="Mergeay M."/>
        </authorList>
    </citation>
    <scope>NUCLEOTIDE SEQUENCE [LARGE SCALE GENOMIC DNA]</scope>
    <source>
        <strain>ATCC 43123 / DSM 2839 / NBRC 102507 / CH34</strain>
    </source>
</reference>
<keyword id="KW-0963">Cytoplasm</keyword>
<keyword id="KW-0369">Histidine metabolism</keyword>
<keyword id="KW-0378">Hydrolase</keyword>
<keyword id="KW-0408">Iron</keyword>
<keyword id="KW-0479">Metal-binding</keyword>
<keyword id="KW-1185">Reference proteome</keyword>
<keyword id="KW-0862">Zinc</keyword>
<dbReference type="EC" id="3.5.2.7" evidence="1"/>
<dbReference type="EMBL" id="CP000352">
    <property type="protein sequence ID" value="ABF09725.1"/>
    <property type="molecule type" value="Genomic_DNA"/>
</dbReference>
<dbReference type="RefSeq" id="WP_011517410.1">
    <property type="nucleotide sequence ID" value="NC_007973.1"/>
</dbReference>
<dbReference type="SMR" id="Q1LJF1"/>
<dbReference type="STRING" id="266264.Rmet_2852"/>
<dbReference type="KEGG" id="rme:Rmet_2852"/>
<dbReference type="eggNOG" id="COG1228">
    <property type="taxonomic scope" value="Bacteria"/>
</dbReference>
<dbReference type="HOGENOM" id="CLU_041647_0_0_4"/>
<dbReference type="UniPathway" id="UPA00379">
    <property type="reaction ID" value="UER00551"/>
</dbReference>
<dbReference type="Proteomes" id="UP000002429">
    <property type="component" value="Chromosome"/>
</dbReference>
<dbReference type="GO" id="GO:0005737">
    <property type="term" value="C:cytoplasm"/>
    <property type="evidence" value="ECO:0007669"/>
    <property type="project" value="UniProtKB-SubCell"/>
</dbReference>
<dbReference type="GO" id="GO:0050480">
    <property type="term" value="F:imidazolonepropionase activity"/>
    <property type="evidence" value="ECO:0007669"/>
    <property type="project" value="UniProtKB-UniRule"/>
</dbReference>
<dbReference type="GO" id="GO:0005506">
    <property type="term" value="F:iron ion binding"/>
    <property type="evidence" value="ECO:0007669"/>
    <property type="project" value="UniProtKB-UniRule"/>
</dbReference>
<dbReference type="GO" id="GO:0008270">
    <property type="term" value="F:zinc ion binding"/>
    <property type="evidence" value="ECO:0007669"/>
    <property type="project" value="UniProtKB-UniRule"/>
</dbReference>
<dbReference type="GO" id="GO:0019556">
    <property type="term" value="P:L-histidine catabolic process to glutamate and formamide"/>
    <property type="evidence" value="ECO:0007669"/>
    <property type="project" value="UniProtKB-UniPathway"/>
</dbReference>
<dbReference type="GO" id="GO:0019557">
    <property type="term" value="P:L-histidine catabolic process to glutamate and formate"/>
    <property type="evidence" value="ECO:0007669"/>
    <property type="project" value="UniProtKB-UniPathway"/>
</dbReference>
<dbReference type="CDD" id="cd01296">
    <property type="entry name" value="Imidazolone-5PH"/>
    <property type="match status" value="1"/>
</dbReference>
<dbReference type="FunFam" id="3.20.20.140:FF:000007">
    <property type="entry name" value="Imidazolonepropionase"/>
    <property type="match status" value="1"/>
</dbReference>
<dbReference type="Gene3D" id="3.20.20.140">
    <property type="entry name" value="Metal-dependent hydrolases"/>
    <property type="match status" value="1"/>
</dbReference>
<dbReference type="Gene3D" id="2.30.40.10">
    <property type="entry name" value="Urease, subunit C, domain 1"/>
    <property type="match status" value="1"/>
</dbReference>
<dbReference type="HAMAP" id="MF_00372">
    <property type="entry name" value="HutI"/>
    <property type="match status" value="1"/>
</dbReference>
<dbReference type="InterPro" id="IPR006680">
    <property type="entry name" value="Amidohydro-rel"/>
</dbReference>
<dbReference type="InterPro" id="IPR005920">
    <property type="entry name" value="HutI"/>
</dbReference>
<dbReference type="InterPro" id="IPR011059">
    <property type="entry name" value="Metal-dep_hydrolase_composite"/>
</dbReference>
<dbReference type="InterPro" id="IPR032466">
    <property type="entry name" value="Metal_Hydrolase"/>
</dbReference>
<dbReference type="NCBIfam" id="TIGR01224">
    <property type="entry name" value="hutI"/>
    <property type="match status" value="1"/>
</dbReference>
<dbReference type="PANTHER" id="PTHR42752">
    <property type="entry name" value="IMIDAZOLONEPROPIONASE"/>
    <property type="match status" value="1"/>
</dbReference>
<dbReference type="PANTHER" id="PTHR42752:SF1">
    <property type="entry name" value="IMIDAZOLONEPROPIONASE-RELATED"/>
    <property type="match status" value="1"/>
</dbReference>
<dbReference type="Pfam" id="PF01979">
    <property type="entry name" value="Amidohydro_1"/>
    <property type="match status" value="1"/>
</dbReference>
<dbReference type="SUPFAM" id="SSF51338">
    <property type="entry name" value="Composite domain of metallo-dependent hydrolases"/>
    <property type="match status" value="1"/>
</dbReference>
<dbReference type="SUPFAM" id="SSF51556">
    <property type="entry name" value="Metallo-dependent hydrolases"/>
    <property type="match status" value="1"/>
</dbReference>
<gene>
    <name evidence="1" type="primary">hutI</name>
    <name type="ordered locus">Rmet_2852</name>
</gene>
<accession>Q1LJF1</accession>
<proteinExistence type="inferred from homology"/>
<comment type="function">
    <text evidence="1">Catalyzes the hydrolytic cleavage of the carbon-nitrogen bond in imidazolone-5-propanoate to yield N-formimidoyl-L-glutamate. It is the third step in the universal histidine degradation pathway.</text>
</comment>
<comment type="catalytic activity">
    <reaction evidence="1">
        <text>4-imidazolone-5-propanoate + H2O = N-formimidoyl-L-glutamate</text>
        <dbReference type="Rhea" id="RHEA:23660"/>
        <dbReference type="ChEBI" id="CHEBI:15377"/>
        <dbReference type="ChEBI" id="CHEBI:58928"/>
        <dbReference type="ChEBI" id="CHEBI:77893"/>
        <dbReference type="EC" id="3.5.2.7"/>
    </reaction>
</comment>
<comment type="cofactor">
    <cofactor evidence="1">
        <name>Zn(2+)</name>
        <dbReference type="ChEBI" id="CHEBI:29105"/>
    </cofactor>
    <cofactor evidence="1">
        <name>Fe(3+)</name>
        <dbReference type="ChEBI" id="CHEBI:29034"/>
    </cofactor>
    <text evidence="1">Binds 1 zinc or iron ion per subunit.</text>
</comment>
<comment type="pathway">
    <text evidence="1">Amino-acid degradation; L-histidine degradation into L-glutamate; N-formimidoyl-L-glutamate from L-histidine: step 3/3.</text>
</comment>
<comment type="subcellular location">
    <subcellularLocation>
        <location evidence="1">Cytoplasm</location>
    </subcellularLocation>
</comment>
<comment type="similarity">
    <text evidence="1">Belongs to the metallo-dependent hydrolases superfamily. HutI family.</text>
</comment>
<sequence>MKFNEAPSADGVWHHCHLLPAADPAQAIRDGAIVVEQGRIAWLGAFAALPDVYRHLPRHDANGAWITPGLVDCHTHLVYGGQRADEFAMRLAGASYEEIARAGGGIVSTVRATREADEATLFAQASARLEPLLAEGVTAIEIKSGYGLSLEAERKQLRVARQLGETYGVAVHTTFLGAHALPPEYAGRADAYIELVCETMLPALAAEGLVDAVDAFCEGIGFSIAQTTRVFEAAARHGLPVKLHAEQLSNLGGAALAARHKAISADHLEHLDEAGVVAMAEAGTVAVLLPGAYYFLRDTQLPPLALLRKHGVPMAISTDHNPGTSPTTSLLLMMNMGCTIFRMTVPEVLAGVTTHAARALGAADRHGLLAVDRAADFVLWQVASPAELAYWFGRNPCAAVVRRGRVFRKGEGWQR</sequence>
<organism>
    <name type="scientific">Cupriavidus metallidurans (strain ATCC 43123 / DSM 2839 / NBRC 102507 / CH34)</name>
    <name type="common">Ralstonia metallidurans</name>
    <dbReference type="NCBI Taxonomy" id="266264"/>
    <lineage>
        <taxon>Bacteria</taxon>
        <taxon>Pseudomonadati</taxon>
        <taxon>Pseudomonadota</taxon>
        <taxon>Betaproteobacteria</taxon>
        <taxon>Burkholderiales</taxon>
        <taxon>Burkholderiaceae</taxon>
        <taxon>Cupriavidus</taxon>
    </lineage>
</organism>